<feature type="chain" id="PRO_0000097129" description="Quinoline 2-oxidoreductase alpha chain">
    <location>
        <begin position="1"/>
        <end position="11" status="greater than"/>
    </location>
</feature>
<feature type="non-terminal residue">
    <location>
        <position position="11"/>
    </location>
</feature>
<comment type="function">
    <text evidence="1">Converts (3-methyl-)-quinoline to (3-methyl-)2-oxo-1,2-dihydroquinoline.</text>
</comment>
<comment type="catalytic activity">
    <reaction evidence="1">
        <text>quinoline + A + H2O = quinolin-2(1H)-one + AH2</text>
        <dbReference type="Rhea" id="RHEA:17749"/>
        <dbReference type="ChEBI" id="CHEBI:13193"/>
        <dbReference type="ChEBI" id="CHEBI:15377"/>
        <dbReference type="ChEBI" id="CHEBI:17362"/>
        <dbReference type="ChEBI" id="CHEBI:17499"/>
        <dbReference type="ChEBI" id="CHEBI:18289"/>
        <dbReference type="EC" id="1.3.99.17"/>
    </reaction>
</comment>
<comment type="cofactor">
    <cofactor evidence="1">
        <name>Mo-molybdopterin cytosine dinucleotide</name>
        <dbReference type="ChEBI" id="CHEBI:71308"/>
    </cofactor>
    <text evidence="1">Binds 1 Mo-molybdopterin cytosine dinucleotide (Mo-MCD) cofactor per subunit.</text>
</comment>
<comment type="pathway">
    <text>Xenobiotic degradation; quinoline degradation.</text>
</comment>
<comment type="subunit">
    <text evidence="2">Heterohexamer of two alpha chains, two beta chains, and two gamma chains.</text>
</comment>
<dbReference type="EC" id="1.3.99.17" evidence="1"/>
<dbReference type="PIR" id="S66606">
    <property type="entry name" value="S66606"/>
</dbReference>
<dbReference type="UniPathway" id="UPA00239"/>
<dbReference type="GO" id="GO:0018523">
    <property type="term" value="F:quinoline 2-oxidoreductase activity"/>
    <property type="evidence" value="ECO:0007669"/>
    <property type="project" value="UniProtKB-EC"/>
</dbReference>
<organism>
    <name type="scientific">Comamonas testosteroni</name>
    <name type="common">Pseudomonas testosteroni</name>
    <dbReference type="NCBI Taxonomy" id="285"/>
    <lineage>
        <taxon>Bacteria</taxon>
        <taxon>Pseudomonadati</taxon>
        <taxon>Pseudomonadota</taxon>
        <taxon>Betaproteobacteria</taxon>
        <taxon>Burkholderiales</taxon>
        <taxon>Comamonadaceae</taxon>
        <taxon>Comamonas</taxon>
    </lineage>
</organism>
<proteinExistence type="evidence at protein level"/>
<sequence>AKSDVAELKPR</sequence>
<protein>
    <recommendedName>
        <fullName>Quinoline 2-oxidoreductase alpha chain</fullName>
        <ecNumber evidence="1">1.3.99.17</ecNumber>
    </recommendedName>
</protein>
<keyword id="KW-0903">Direct protein sequencing</keyword>
<keyword id="KW-0500">Molybdenum</keyword>
<keyword id="KW-0560">Oxidoreductase</keyword>
<accession>P80464</accession>
<name>Q2OA_COMTE</name>
<evidence type="ECO:0000269" key="1">
    <source>
    </source>
</evidence>
<evidence type="ECO:0000305" key="2"/>
<reference key="1">
    <citation type="journal article" date="1995" name="Eur. J. Biochem.">
        <title>Quinoline 2-oxidoreductase and 2-oxo-1,2-dihydroquinoline 5,6-dioxygenase from Comamonas testosteroni 63. The first two enzymes in quinoline and 3-methylquinoline degradation.</title>
        <authorList>
            <person name="Schach S."/>
            <person name="Tshisuaka B."/>
            <person name="Fetzner S."/>
            <person name="Lingens F."/>
        </authorList>
    </citation>
    <scope>PROTEIN SEQUENCE</scope>
    <scope>FUNCTION</scope>
    <scope>CATALYTIC ACTIVITY</scope>
    <scope>COFACTOR</scope>
    <source>
        <strain>63</strain>
    </source>
</reference>